<gene>
    <name evidence="1" type="primary">rpsK</name>
    <name type="ordered locus">MUL_0846</name>
</gene>
<proteinExistence type="inferred from homology"/>
<keyword id="KW-0687">Ribonucleoprotein</keyword>
<keyword id="KW-0689">Ribosomal protein</keyword>
<keyword id="KW-0694">RNA-binding</keyword>
<keyword id="KW-0699">rRNA-binding</keyword>
<protein>
    <recommendedName>
        <fullName evidence="1">Small ribosomal subunit protein uS11</fullName>
    </recommendedName>
    <alternativeName>
        <fullName evidence="3">30S ribosomal protein S11</fullName>
    </alternativeName>
</protein>
<comment type="function">
    <text evidence="1">Located on the platform of the 30S subunit, it bridges several disparate RNA helices of the 16S rRNA. Forms part of the Shine-Dalgarno cleft in the 70S ribosome.</text>
</comment>
<comment type="subunit">
    <text evidence="1">Part of the 30S ribosomal subunit. Interacts with proteins S7 and S18. Binds to IF-3.</text>
</comment>
<comment type="similarity">
    <text evidence="1">Belongs to the universal ribosomal protein uS11 family.</text>
</comment>
<reference key="1">
    <citation type="journal article" date="2007" name="Genome Res.">
        <title>Reductive evolution and niche adaptation inferred from the genome of Mycobacterium ulcerans, the causative agent of Buruli ulcer.</title>
        <authorList>
            <person name="Stinear T.P."/>
            <person name="Seemann T."/>
            <person name="Pidot S."/>
            <person name="Frigui W."/>
            <person name="Reysset G."/>
            <person name="Garnier T."/>
            <person name="Meurice G."/>
            <person name="Simon D."/>
            <person name="Bouchier C."/>
            <person name="Ma L."/>
            <person name="Tichit M."/>
            <person name="Porter J.L."/>
            <person name="Ryan J."/>
            <person name="Johnson P.D.R."/>
            <person name="Davies J.K."/>
            <person name="Jenkin G.A."/>
            <person name="Small P.L.C."/>
            <person name="Jones L.M."/>
            <person name="Tekaia F."/>
            <person name="Laval F."/>
            <person name="Daffe M."/>
            <person name="Parkhill J."/>
            <person name="Cole S.T."/>
        </authorList>
    </citation>
    <scope>NUCLEOTIDE SEQUENCE [LARGE SCALE GENOMIC DNA]</scope>
    <source>
        <strain>Agy99</strain>
    </source>
</reference>
<dbReference type="EMBL" id="CP000325">
    <property type="protein sequence ID" value="ABL03484.1"/>
    <property type="molecule type" value="Genomic_DNA"/>
</dbReference>
<dbReference type="RefSeq" id="WP_011739107.1">
    <property type="nucleotide sequence ID" value="NC_008611.1"/>
</dbReference>
<dbReference type="SMR" id="A0PMB5"/>
<dbReference type="GeneID" id="93438544"/>
<dbReference type="KEGG" id="mul:MUL_0846"/>
<dbReference type="eggNOG" id="COG0100">
    <property type="taxonomic scope" value="Bacteria"/>
</dbReference>
<dbReference type="HOGENOM" id="CLU_072439_5_0_11"/>
<dbReference type="Proteomes" id="UP000000765">
    <property type="component" value="Chromosome"/>
</dbReference>
<dbReference type="GO" id="GO:1990904">
    <property type="term" value="C:ribonucleoprotein complex"/>
    <property type="evidence" value="ECO:0007669"/>
    <property type="project" value="UniProtKB-KW"/>
</dbReference>
<dbReference type="GO" id="GO:0005840">
    <property type="term" value="C:ribosome"/>
    <property type="evidence" value="ECO:0007669"/>
    <property type="project" value="UniProtKB-KW"/>
</dbReference>
<dbReference type="GO" id="GO:0019843">
    <property type="term" value="F:rRNA binding"/>
    <property type="evidence" value="ECO:0007669"/>
    <property type="project" value="UniProtKB-UniRule"/>
</dbReference>
<dbReference type="GO" id="GO:0003735">
    <property type="term" value="F:structural constituent of ribosome"/>
    <property type="evidence" value="ECO:0007669"/>
    <property type="project" value="InterPro"/>
</dbReference>
<dbReference type="GO" id="GO:0006412">
    <property type="term" value="P:translation"/>
    <property type="evidence" value="ECO:0007669"/>
    <property type="project" value="UniProtKB-UniRule"/>
</dbReference>
<dbReference type="FunFam" id="3.30.420.80:FF:000001">
    <property type="entry name" value="30S ribosomal protein S11"/>
    <property type="match status" value="1"/>
</dbReference>
<dbReference type="Gene3D" id="3.30.420.80">
    <property type="entry name" value="Ribosomal protein S11"/>
    <property type="match status" value="1"/>
</dbReference>
<dbReference type="HAMAP" id="MF_01310">
    <property type="entry name" value="Ribosomal_uS11"/>
    <property type="match status" value="1"/>
</dbReference>
<dbReference type="InterPro" id="IPR001971">
    <property type="entry name" value="Ribosomal_uS11"/>
</dbReference>
<dbReference type="InterPro" id="IPR019981">
    <property type="entry name" value="Ribosomal_uS11_bac-type"/>
</dbReference>
<dbReference type="InterPro" id="IPR018102">
    <property type="entry name" value="Ribosomal_uS11_CS"/>
</dbReference>
<dbReference type="InterPro" id="IPR036967">
    <property type="entry name" value="Ribosomal_uS11_sf"/>
</dbReference>
<dbReference type="NCBIfam" id="NF003698">
    <property type="entry name" value="PRK05309.1"/>
    <property type="match status" value="1"/>
</dbReference>
<dbReference type="NCBIfam" id="TIGR03632">
    <property type="entry name" value="uS11_bact"/>
    <property type="match status" value="1"/>
</dbReference>
<dbReference type="PANTHER" id="PTHR11759">
    <property type="entry name" value="40S RIBOSOMAL PROTEIN S14/30S RIBOSOMAL PROTEIN S11"/>
    <property type="match status" value="1"/>
</dbReference>
<dbReference type="Pfam" id="PF00411">
    <property type="entry name" value="Ribosomal_S11"/>
    <property type="match status" value="1"/>
</dbReference>
<dbReference type="PIRSF" id="PIRSF002131">
    <property type="entry name" value="Ribosomal_S11"/>
    <property type="match status" value="1"/>
</dbReference>
<dbReference type="SUPFAM" id="SSF53137">
    <property type="entry name" value="Translational machinery components"/>
    <property type="match status" value="1"/>
</dbReference>
<dbReference type="PROSITE" id="PS00054">
    <property type="entry name" value="RIBOSOMAL_S11"/>
    <property type="match status" value="1"/>
</dbReference>
<sequence>MPPKKASGTGPKKGQKTRRREKKNVPHGAAHIKSTFNNTIVTITDPQGNVIAWASSGHVGFKGSRKSTPFAAQLAAENAARKAQEHGVRKVDVFVKGPGSGRETAIRSLQAAGLEVGAISDVTPQPHNGVRPPKRRRV</sequence>
<accession>A0PMB5</accession>
<name>RS11_MYCUA</name>
<evidence type="ECO:0000255" key="1">
    <source>
        <dbReference type="HAMAP-Rule" id="MF_01310"/>
    </source>
</evidence>
<evidence type="ECO:0000256" key="2">
    <source>
        <dbReference type="SAM" id="MobiDB-lite"/>
    </source>
</evidence>
<evidence type="ECO:0000305" key="3"/>
<organism>
    <name type="scientific">Mycobacterium ulcerans (strain Agy99)</name>
    <dbReference type="NCBI Taxonomy" id="362242"/>
    <lineage>
        <taxon>Bacteria</taxon>
        <taxon>Bacillati</taxon>
        <taxon>Actinomycetota</taxon>
        <taxon>Actinomycetes</taxon>
        <taxon>Mycobacteriales</taxon>
        <taxon>Mycobacteriaceae</taxon>
        <taxon>Mycobacterium</taxon>
        <taxon>Mycobacterium ulcerans group</taxon>
    </lineage>
</organism>
<feature type="chain" id="PRO_0000294800" description="Small ribosomal subunit protein uS11">
    <location>
        <begin position="1"/>
        <end position="138"/>
    </location>
</feature>
<feature type="region of interest" description="Disordered" evidence="2">
    <location>
        <begin position="1"/>
        <end position="29"/>
    </location>
</feature>
<feature type="region of interest" description="Disordered" evidence="2">
    <location>
        <begin position="117"/>
        <end position="138"/>
    </location>
</feature>
<feature type="compositionally biased region" description="Basic residues" evidence="2">
    <location>
        <begin position="13"/>
        <end position="22"/>
    </location>
</feature>